<sequence>MAALRYKADFLKASIDGGVLKFGSFELKSKRISPYFFNAGDFYRADLLQAISTAYAKCIIEAHKSGQLDFDIVFGPAYKGIPLATAATDKLAQLDPETYGKICYSFDRKEAKDHGEGGNIVGAPLKGKRILIVDDVITAGTAKREAIAKIEKEGGIVAGIVVALDRMEKLPAADGDDSKPGPSAMVSSARSTAIPIFAILTLDDIIEGMRGLASPEDVKKTEEYRAKYKATD</sequence>
<comment type="function">
    <text evidence="1">Catalyzes the transfer of a ribosyl phosphate group from 5-phosphoribose 1-diphosphate to orotate, leading to the formation of orotidine monophosphate (OMP).</text>
</comment>
<comment type="catalytic activity">
    <reaction>
        <text>orotidine 5'-phosphate + diphosphate = orotate + 5-phospho-alpha-D-ribose 1-diphosphate</text>
        <dbReference type="Rhea" id="RHEA:10380"/>
        <dbReference type="ChEBI" id="CHEBI:30839"/>
        <dbReference type="ChEBI" id="CHEBI:33019"/>
        <dbReference type="ChEBI" id="CHEBI:57538"/>
        <dbReference type="ChEBI" id="CHEBI:58017"/>
        <dbReference type="EC" id="2.4.2.10"/>
    </reaction>
</comment>
<comment type="pathway">
    <text>Pyrimidine metabolism; UMP biosynthesis via de novo pathway; UMP from orotate: step 1/2.</text>
</comment>
<comment type="subunit">
    <text evidence="1">Homodimer.</text>
</comment>
<comment type="similarity">
    <text evidence="2">Belongs to the purine/pyrimidine phosphoribosyltransferase family. PyrE subfamily.</text>
</comment>
<proteinExistence type="inferred from homology"/>
<protein>
    <recommendedName>
        <fullName>Orotate phosphoribosyltransferase</fullName>
        <shortName>OPRT</shortName>
        <shortName>OPRTase</shortName>
        <ecNumber>2.4.2.10</ecNumber>
    </recommendedName>
</protein>
<evidence type="ECO:0000250" key="1"/>
<evidence type="ECO:0000305" key="2"/>
<organism>
    <name type="scientific">Sordaria macrospora</name>
    <dbReference type="NCBI Taxonomy" id="5147"/>
    <lineage>
        <taxon>Eukaryota</taxon>
        <taxon>Fungi</taxon>
        <taxon>Dikarya</taxon>
        <taxon>Ascomycota</taxon>
        <taxon>Pezizomycotina</taxon>
        <taxon>Sordariomycetes</taxon>
        <taxon>Sordariomycetidae</taxon>
        <taxon>Sordariales</taxon>
        <taxon>Sordariaceae</taxon>
        <taxon>Sordaria</taxon>
    </lineage>
</organism>
<name>PYRE_SORMA</name>
<reference key="1">
    <citation type="journal article" date="1989" name="Gene">
        <title>The ura5 gene of the ascomycete Sordaria macrospora: molecular cloning, characterization and expression in Escherichia coli.</title>
        <authorList>
            <person name="le Chevanton L."/>
            <person name="Leblon G."/>
        </authorList>
    </citation>
    <scope>NUCLEOTIDE SEQUENCE [GENOMIC DNA]</scope>
    <source>
        <strain>ATCC 60255 / FGSC 4818</strain>
    </source>
</reference>
<dbReference type="EC" id="2.4.2.10"/>
<dbReference type="EMBL" id="M26957">
    <property type="protein sequence ID" value="AAA33929.1"/>
    <property type="molecule type" value="Genomic_DNA"/>
</dbReference>
<dbReference type="PIR" id="JS0175">
    <property type="entry name" value="JS0175"/>
</dbReference>
<dbReference type="SMR" id="P18904"/>
<dbReference type="VEuPathDB" id="FungiDB:SMAC_01699"/>
<dbReference type="UniPathway" id="UPA00070">
    <property type="reaction ID" value="UER00119"/>
</dbReference>
<dbReference type="GO" id="GO:0005737">
    <property type="term" value="C:cytoplasm"/>
    <property type="evidence" value="ECO:0007669"/>
    <property type="project" value="TreeGrafter"/>
</dbReference>
<dbReference type="GO" id="GO:0004588">
    <property type="term" value="F:orotate phosphoribosyltransferase activity"/>
    <property type="evidence" value="ECO:0007669"/>
    <property type="project" value="UniProtKB-EC"/>
</dbReference>
<dbReference type="GO" id="GO:0006207">
    <property type="term" value="P:'de novo' pyrimidine nucleobase biosynthetic process"/>
    <property type="evidence" value="ECO:0007669"/>
    <property type="project" value="TreeGrafter"/>
</dbReference>
<dbReference type="GO" id="GO:0044205">
    <property type="term" value="P:'de novo' UMP biosynthetic process"/>
    <property type="evidence" value="ECO:0007669"/>
    <property type="project" value="UniProtKB-UniPathway"/>
</dbReference>
<dbReference type="GO" id="GO:0046132">
    <property type="term" value="P:pyrimidine ribonucleoside biosynthetic process"/>
    <property type="evidence" value="ECO:0007669"/>
    <property type="project" value="TreeGrafter"/>
</dbReference>
<dbReference type="CDD" id="cd06223">
    <property type="entry name" value="PRTases_typeI"/>
    <property type="match status" value="1"/>
</dbReference>
<dbReference type="FunFam" id="3.40.50.2020:FF:000008">
    <property type="entry name" value="Orotate phosphoribosyltransferase"/>
    <property type="match status" value="1"/>
</dbReference>
<dbReference type="Gene3D" id="3.40.50.2020">
    <property type="match status" value="1"/>
</dbReference>
<dbReference type="HAMAP" id="MF_01208">
    <property type="entry name" value="PyrE"/>
    <property type="match status" value="1"/>
</dbReference>
<dbReference type="InterPro" id="IPR023031">
    <property type="entry name" value="OPRT"/>
</dbReference>
<dbReference type="InterPro" id="IPR004467">
    <property type="entry name" value="Or_phspho_trans_dom"/>
</dbReference>
<dbReference type="InterPro" id="IPR000836">
    <property type="entry name" value="PRibTrfase_dom"/>
</dbReference>
<dbReference type="InterPro" id="IPR029057">
    <property type="entry name" value="PRTase-like"/>
</dbReference>
<dbReference type="NCBIfam" id="TIGR00336">
    <property type="entry name" value="pyrE"/>
    <property type="match status" value="1"/>
</dbReference>
<dbReference type="PANTHER" id="PTHR46683">
    <property type="entry name" value="OROTATE PHOSPHORIBOSYLTRANSFERASE 1-RELATED"/>
    <property type="match status" value="1"/>
</dbReference>
<dbReference type="PANTHER" id="PTHR46683:SF1">
    <property type="entry name" value="OROTATE PHOSPHORIBOSYLTRANSFERASE 1-RELATED"/>
    <property type="match status" value="1"/>
</dbReference>
<dbReference type="Pfam" id="PF00156">
    <property type="entry name" value="Pribosyltran"/>
    <property type="match status" value="1"/>
</dbReference>
<dbReference type="SUPFAM" id="SSF53271">
    <property type="entry name" value="PRTase-like"/>
    <property type="match status" value="1"/>
</dbReference>
<dbReference type="PROSITE" id="PS00103">
    <property type="entry name" value="PUR_PYR_PR_TRANSFER"/>
    <property type="match status" value="1"/>
</dbReference>
<feature type="chain" id="PRO_0000110801" description="Orotate phosphoribosyltransferase">
    <location>
        <begin position="1"/>
        <end position="232"/>
    </location>
</feature>
<feature type="binding site" description="in other chain" evidence="1">
    <location>
        <position position="28"/>
    </location>
    <ligand>
        <name>5-phospho-alpha-D-ribose 1-diphosphate</name>
        <dbReference type="ChEBI" id="CHEBI:58017"/>
        <note>ligand shared between dimeric partners</note>
    </ligand>
</feature>
<feature type="binding site" evidence="1">
    <location>
        <begin position="36"/>
        <end position="37"/>
    </location>
    <ligand>
        <name>orotate</name>
        <dbReference type="ChEBI" id="CHEBI:30839"/>
    </ligand>
</feature>
<feature type="binding site" description="in other chain" evidence="1">
    <location>
        <begin position="78"/>
        <end position="79"/>
    </location>
    <ligand>
        <name>5-phospho-alpha-D-ribose 1-diphosphate</name>
        <dbReference type="ChEBI" id="CHEBI:58017"/>
        <note>ligand shared between dimeric partners</note>
    </ligand>
</feature>
<feature type="binding site" evidence="1">
    <location>
        <position position="108"/>
    </location>
    <ligand>
        <name>5-phospho-alpha-D-ribose 1-diphosphate</name>
        <dbReference type="ChEBI" id="CHEBI:58017"/>
        <note>ligand shared between dimeric partners</note>
    </ligand>
</feature>
<feature type="binding site" description="in other chain" evidence="1">
    <location>
        <position position="109"/>
    </location>
    <ligand>
        <name>5-phospho-alpha-D-ribose 1-diphosphate</name>
        <dbReference type="ChEBI" id="CHEBI:58017"/>
        <note>ligand shared between dimeric partners</note>
    </ligand>
</feature>
<feature type="binding site" evidence="1">
    <location>
        <position position="112"/>
    </location>
    <ligand>
        <name>5-phospho-alpha-D-ribose 1-diphosphate</name>
        <dbReference type="ChEBI" id="CHEBI:58017"/>
        <note>ligand shared between dimeric partners</note>
    </ligand>
</feature>
<feature type="binding site" evidence="1">
    <location>
        <position position="114"/>
    </location>
    <ligand>
        <name>5-phospho-alpha-D-ribose 1-diphosphate</name>
        <dbReference type="ChEBI" id="CHEBI:58017"/>
        <note>ligand shared between dimeric partners</note>
    </ligand>
</feature>
<feature type="binding site" description="in other chain" evidence="1">
    <location>
        <begin position="134"/>
        <end position="142"/>
    </location>
    <ligand>
        <name>5-phospho-alpha-D-ribose 1-diphosphate</name>
        <dbReference type="ChEBI" id="CHEBI:58017"/>
        <note>ligand shared between dimeric partners</note>
    </ligand>
</feature>
<feature type="binding site" evidence="1">
    <location>
        <position position="138"/>
    </location>
    <ligand>
        <name>orotate</name>
        <dbReference type="ChEBI" id="CHEBI:30839"/>
    </ligand>
</feature>
<feature type="binding site" evidence="1">
    <location>
        <position position="166"/>
    </location>
    <ligand>
        <name>orotate</name>
        <dbReference type="ChEBI" id="CHEBI:30839"/>
    </ligand>
</feature>
<keyword id="KW-0328">Glycosyltransferase</keyword>
<keyword id="KW-0665">Pyrimidine biosynthesis</keyword>
<keyword id="KW-0808">Transferase</keyword>
<gene>
    <name type="primary">URA5</name>
</gene>
<accession>P18904</accession>